<comment type="function">
    <text evidence="1">Allows the formation of correctly charged Gln-tRNA(Gln) through the transamidation of misacylated Glu-tRNA(Gln) in organisms which lack glutaminyl-tRNA synthetase. The reaction takes place in the presence of glutamine and ATP through an activated gamma-phospho-Glu-tRNA(Gln).</text>
</comment>
<comment type="catalytic activity">
    <reaction evidence="1">
        <text>L-glutamyl-tRNA(Gln) + L-glutamine + ATP + H2O = L-glutaminyl-tRNA(Gln) + L-glutamate + ADP + phosphate + H(+)</text>
        <dbReference type="Rhea" id="RHEA:17521"/>
        <dbReference type="Rhea" id="RHEA-COMP:9681"/>
        <dbReference type="Rhea" id="RHEA-COMP:9684"/>
        <dbReference type="ChEBI" id="CHEBI:15377"/>
        <dbReference type="ChEBI" id="CHEBI:15378"/>
        <dbReference type="ChEBI" id="CHEBI:29985"/>
        <dbReference type="ChEBI" id="CHEBI:30616"/>
        <dbReference type="ChEBI" id="CHEBI:43474"/>
        <dbReference type="ChEBI" id="CHEBI:58359"/>
        <dbReference type="ChEBI" id="CHEBI:78520"/>
        <dbReference type="ChEBI" id="CHEBI:78521"/>
        <dbReference type="ChEBI" id="CHEBI:456216"/>
        <dbReference type="EC" id="6.3.5.7"/>
    </reaction>
</comment>
<comment type="subunit">
    <text evidence="1">Heterotrimer of A, B and C subunits.</text>
</comment>
<comment type="similarity">
    <text evidence="1">Belongs to the amidase family. GatA subfamily.</text>
</comment>
<evidence type="ECO:0000255" key="1">
    <source>
        <dbReference type="HAMAP-Rule" id="MF_00120"/>
    </source>
</evidence>
<accession>A3MNR6</accession>
<feature type="chain" id="PRO_1000015808" description="Glutamyl-tRNA(Gln) amidotransferase subunit A">
    <location>
        <begin position="1"/>
        <end position="496"/>
    </location>
</feature>
<feature type="active site" description="Charge relay system" evidence="1">
    <location>
        <position position="75"/>
    </location>
</feature>
<feature type="active site" description="Charge relay system" evidence="1">
    <location>
        <position position="150"/>
    </location>
</feature>
<feature type="active site" description="Acyl-ester intermediate" evidence="1">
    <location>
        <position position="174"/>
    </location>
</feature>
<name>GATA_BURM7</name>
<proteinExistence type="inferred from homology"/>
<gene>
    <name evidence="1" type="primary">gatA</name>
    <name type="ordered locus">BMA10247_2376</name>
</gene>
<reference key="1">
    <citation type="journal article" date="2010" name="Genome Biol. Evol.">
        <title>Continuing evolution of Burkholderia mallei through genome reduction and large-scale rearrangements.</title>
        <authorList>
            <person name="Losada L."/>
            <person name="Ronning C.M."/>
            <person name="DeShazer D."/>
            <person name="Woods D."/>
            <person name="Fedorova N."/>
            <person name="Kim H.S."/>
            <person name="Shabalina S.A."/>
            <person name="Pearson T.R."/>
            <person name="Brinkac L."/>
            <person name="Tan P."/>
            <person name="Nandi T."/>
            <person name="Crabtree J."/>
            <person name="Badger J."/>
            <person name="Beckstrom-Sternberg S."/>
            <person name="Saqib M."/>
            <person name="Schutzer S.E."/>
            <person name="Keim P."/>
            <person name="Nierman W.C."/>
        </authorList>
    </citation>
    <scope>NUCLEOTIDE SEQUENCE [LARGE SCALE GENOMIC DNA]</scope>
    <source>
        <strain>NCTC 10247</strain>
    </source>
</reference>
<organism>
    <name type="scientific">Burkholderia mallei (strain NCTC 10247)</name>
    <dbReference type="NCBI Taxonomy" id="320389"/>
    <lineage>
        <taxon>Bacteria</taxon>
        <taxon>Pseudomonadati</taxon>
        <taxon>Pseudomonadota</taxon>
        <taxon>Betaproteobacteria</taxon>
        <taxon>Burkholderiales</taxon>
        <taxon>Burkholderiaceae</taxon>
        <taxon>Burkholderia</taxon>
        <taxon>pseudomallei group</taxon>
    </lineage>
</organism>
<protein>
    <recommendedName>
        <fullName evidence="1">Glutamyl-tRNA(Gln) amidotransferase subunit A</fullName>
        <shortName evidence="1">Glu-ADT subunit A</shortName>
        <ecNumber evidence="1">6.3.5.7</ecNumber>
    </recommendedName>
</protein>
<sequence length="496" mass="52264">MHAKSLTELRAALDAKECSAVELAQHYLKRIDAARDLNAFVHVDAELTLAQAKAADAALANGEAGPLAGLPIVHKDVFVTRGWRSTAGSKMLANYASPFDATVVARLSAAGMVTLGKTNMDEFAMGSSNENSAFGPVKNPWDTSAVPGGSSGGSSAAVAARLAPAATGTDTGGSIRQPASFAGVTGIKPTYGRVSRYGMIAFASSLDQGGPMARSAADCALLLNAMAGFDERDSTSLERADEDYTRHLGKAWAAGGDAGKPLAGLRIGLPAEYFGAGLADDVRAAIDAALKTYEALGATLVPVSLPKTELSIPVYYVIAPAEASSNLSRFDGVRYGHRAAEYRDLLDMYKKSRAEGFGPEVKRRILVGTYVLSHGYYDAYYLQAQKIRRIIAQDFQEAFKSCDVIMGPASPTVAWDIGAKGDDPVQMYLADIYTLSVSLAGLPGMSVPCGFGAGANAKRPVGLQIIGNYFDEARMLQVADAFQRATDWHVQEPAGV</sequence>
<keyword id="KW-0067">ATP-binding</keyword>
<keyword id="KW-0436">Ligase</keyword>
<keyword id="KW-0547">Nucleotide-binding</keyword>
<keyword id="KW-0648">Protein biosynthesis</keyword>
<dbReference type="EC" id="6.3.5.7" evidence="1"/>
<dbReference type="EMBL" id="CP000548">
    <property type="protein sequence ID" value="ABO06536.1"/>
    <property type="molecule type" value="Genomic_DNA"/>
</dbReference>
<dbReference type="RefSeq" id="WP_004189326.1">
    <property type="nucleotide sequence ID" value="NZ_CP007802.1"/>
</dbReference>
<dbReference type="SMR" id="A3MNR6"/>
<dbReference type="GeneID" id="92977942"/>
<dbReference type="KEGG" id="bmaz:BM44_912"/>
<dbReference type="KEGG" id="bmn:BMA10247_2376"/>
<dbReference type="PATRIC" id="fig|320389.8.peg.1015"/>
<dbReference type="GO" id="GO:0030956">
    <property type="term" value="C:glutamyl-tRNA(Gln) amidotransferase complex"/>
    <property type="evidence" value="ECO:0007669"/>
    <property type="project" value="InterPro"/>
</dbReference>
<dbReference type="GO" id="GO:0005524">
    <property type="term" value="F:ATP binding"/>
    <property type="evidence" value="ECO:0007669"/>
    <property type="project" value="UniProtKB-KW"/>
</dbReference>
<dbReference type="GO" id="GO:0050567">
    <property type="term" value="F:glutaminyl-tRNA synthase (glutamine-hydrolyzing) activity"/>
    <property type="evidence" value="ECO:0007669"/>
    <property type="project" value="UniProtKB-UniRule"/>
</dbReference>
<dbReference type="GO" id="GO:0006412">
    <property type="term" value="P:translation"/>
    <property type="evidence" value="ECO:0007669"/>
    <property type="project" value="UniProtKB-UniRule"/>
</dbReference>
<dbReference type="Gene3D" id="3.90.1300.10">
    <property type="entry name" value="Amidase signature (AS) domain"/>
    <property type="match status" value="1"/>
</dbReference>
<dbReference type="HAMAP" id="MF_00120">
    <property type="entry name" value="GatA"/>
    <property type="match status" value="1"/>
</dbReference>
<dbReference type="InterPro" id="IPR000120">
    <property type="entry name" value="Amidase"/>
</dbReference>
<dbReference type="InterPro" id="IPR020556">
    <property type="entry name" value="Amidase_CS"/>
</dbReference>
<dbReference type="InterPro" id="IPR023631">
    <property type="entry name" value="Amidase_dom"/>
</dbReference>
<dbReference type="InterPro" id="IPR036928">
    <property type="entry name" value="AS_sf"/>
</dbReference>
<dbReference type="InterPro" id="IPR004412">
    <property type="entry name" value="GatA"/>
</dbReference>
<dbReference type="NCBIfam" id="TIGR00132">
    <property type="entry name" value="gatA"/>
    <property type="match status" value="1"/>
</dbReference>
<dbReference type="PANTHER" id="PTHR11895:SF151">
    <property type="entry name" value="GLUTAMYL-TRNA(GLN) AMIDOTRANSFERASE SUBUNIT A"/>
    <property type="match status" value="1"/>
</dbReference>
<dbReference type="PANTHER" id="PTHR11895">
    <property type="entry name" value="TRANSAMIDASE"/>
    <property type="match status" value="1"/>
</dbReference>
<dbReference type="Pfam" id="PF01425">
    <property type="entry name" value="Amidase"/>
    <property type="match status" value="1"/>
</dbReference>
<dbReference type="SUPFAM" id="SSF75304">
    <property type="entry name" value="Amidase signature (AS) enzymes"/>
    <property type="match status" value="1"/>
</dbReference>
<dbReference type="PROSITE" id="PS00571">
    <property type="entry name" value="AMIDASES"/>
    <property type="match status" value="1"/>
</dbReference>